<gene>
    <name type="ordered locus">HVO_1016</name>
    <name type="ORF">C498_13679</name>
</gene>
<name>JAMM2_HALVD</name>
<proteinExistence type="evidence at protein level"/>
<accession>D4GVJ3</accession>
<sequence length="161" mass="17677">MRLFRSREVVGIAADALDFALEASAETHPNEYMGLLRGEEARRVGVDRDGYVVTDVLIIPGTVSDPYSATVRNDLVPNDFHAVGSIHSHPNGVLRPSDADLDTFGSGRVHIIIGSPYGPDDWEAFDQSGEVRDLDVLDADLSDPESFFDFTQDDIDAELDR</sequence>
<organism>
    <name type="scientific">Haloferax volcanii (strain ATCC 29605 / DSM 3757 / JCM 8879 / NBRC 14742 / NCIMB 2012 / VKM B-1768 / DS2)</name>
    <name type="common">Halobacterium volcanii</name>
    <dbReference type="NCBI Taxonomy" id="309800"/>
    <lineage>
        <taxon>Archaea</taxon>
        <taxon>Methanobacteriati</taxon>
        <taxon>Methanobacteriota</taxon>
        <taxon>Stenosarchaea group</taxon>
        <taxon>Halobacteria</taxon>
        <taxon>Halobacteriales</taxon>
        <taxon>Haloferacaceae</taxon>
        <taxon>Haloferax</taxon>
    </lineage>
</organism>
<feature type="chain" id="PRO_0000428939" description="Probable metalloprotease HVO_1016">
    <location>
        <begin position="1"/>
        <end position="161"/>
    </location>
</feature>
<feature type="domain" description="MPN" evidence="2">
    <location>
        <begin position="10"/>
        <end position="131"/>
    </location>
</feature>
<feature type="short sequence motif" description="JAMM motif" evidence="2">
    <location>
        <begin position="87"/>
        <end position="100"/>
    </location>
</feature>
<feature type="active site" description="Proton donor/acceptor" evidence="1">
    <location>
        <position position="31"/>
    </location>
</feature>
<feature type="binding site" evidence="2">
    <location>
        <position position="87"/>
    </location>
    <ligand>
        <name>Zn(2+)</name>
        <dbReference type="ChEBI" id="CHEBI:29105"/>
        <note>catalytic</note>
    </ligand>
</feature>
<feature type="binding site" evidence="2">
    <location>
        <position position="89"/>
    </location>
    <ligand>
        <name>Zn(2+)</name>
        <dbReference type="ChEBI" id="CHEBI:29105"/>
        <note>catalytic</note>
    </ligand>
</feature>
<feature type="binding site" evidence="2">
    <location>
        <position position="100"/>
    </location>
    <ligand>
        <name>Zn(2+)</name>
        <dbReference type="ChEBI" id="CHEBI:29105"/>
        <note>catalytic</note>
    </ligand>
</feature>
<feature type="site" description="Transition state stabilizer" evidence="1">
    <location>
        <position position="97"/>
    </location>
</feature>
<keyword id="KW-0378">Hydrolase</keyword>
<keyword id="KW-0479">Metal-binding</keyword>
<keyword id="KW-0482">Metalloprotease</keyword>
<keyword id="KW-0645">Protease</keyword>
<keyword id="KW-1185">Reference proteome</keyword>
<keyword id="KW-0862">Zinc</keyword>
<comment type="function">
    <text evidence="3">Probable metalloprotease. Does not hydrolyze SAMP1- and SAMP2-protein conjugates, diglycine-AMC, Ub-AMC, hemoglobin, cytochrome c, carbonic anhydrase, creatinine phosphokinase, beta-amylase and bovine serum albumin.</text>
</comment>
<comment type="cofactor">
    <cofactor evidence="1">
        <name>Zn(2+)</name>
        <dbReference type="ChEBI" id="CHEBI:29105"/>
    </cofactor>
    <text evidence="1">Binds 1 zinc ion per subunit.</text>
</comment>
<comment type="subunit">
    <text evidence="3">Monomer and homodimer.</text>
</comment>
<comment type="similarity">
    <text evidence="4">Belongs to the peptidase M67B family.</text>
</comment>
<reference key="1">
    <citation type="journal article" date="2010" name="PLoS ONE">
        <title>The complete genome sequence of Haloferax volcanii DS2, a model archaeon.</title>
        <authorList>
            <person name="Hartman A.L."/>
            <person name="Norais C."/>
            <person name="Badger J.H."/>
            <person name="Delmas S."/>
            <person name="Haldenby S."/>
            <person name="Madupu R."/>
            <person name="Robinson J."/>
            <person name="Khouri H."/>
            <person name="Ren Q."/>
            <person name="Lowe T.M."/>
            <person name="Maupin-Furlow J."/>
            <person name="Pohlschroder M."/>
            <person name="Daniels C."/>
            <person name="Pfeiffer F."/>
            <person name="Allers T."/>
            <person name="Eisen J.A."/>
        </authorList>
    </citation>
    <scope>NUCLEOTIDE SEQUENCE [LARGE SCALE GENOMIC DNA]</scope>
    <source>
        <strain>ATCC 29605 / DSM 3757 / JCM 8879 / NBRC 14742 / NCIMB 2012 / VKM B-1768 / DS2</strain>
    </source>
</reference>
<reference key="2">
    <citation type="journal article" date="2014" name="PLoS Genet.">
        <title>Phylogenetically driven sequencing of extremely halophilic archaea reveals strategies for static and dynamic osmo-response.</title>
        <authorList>
            <person name="Becker E.A."/>
            <person name="Seitzer P.M."/>
            <person name="Tritt A."/>
            <person name="Larsen D."/>
            <person name="Krusor M."/>
            <person name="Yao A.I."/>
            <person name="Wu D."/>
            <person name="Madern D."/>
            <person name="Eisen J.A."/>
            <person name="Darling A.E."/>
            <person name="Facciotti M.T."/>
        </authorList>
    </citation>
    <scope>NUCLEOTIDE SEQUENCE [LARGE SCALE GENOMIC DNA]</scope>
    <source>
        <strain>ATCC 29605 / DSM 3757 / JCM 8879 / NBRC 14742 / NCIMB 2012 / VKM B-1768 / DS2</strain>
    </source>
</reference>
<reference key="3">
    <citation type="journal article" date="2012" name="Mol. Microbiol.">
        <title>Archaeal JAB1/MPN/MOV34 metalloenzyme (HvJAMM1) cleaves ubiquitin-like small archaeal modifier proteins (SAMPs) from protein-conjugates.</title>
        <authorList>
            <person name="Hepowit N.L."/>
            <person name="Uthandi S."/>
            <person name="Miranda H.V."/>
            <person name="Toniutti M."/>
            <person name="Prunetti L."/>
            <person name="Olivarez O."/>
            <person name="De Vera I.M."/>
            <person name="Fanucci G.E."/>
            <person name="Chen S."/>
            <person name="Maupin-Furlow J.A."/>
        </authorList>
    </citation>
    <scope>FUNCTION</scope>
    <scope>SUBUNIT</scope>
    <source>
        <strain>DS2 / DS70</strain>
    </source>
</reference>
<dbReference type="EMBL" id="CP001956">
    <property type="protein sequence ID" value="ADE03305.1"/>
    <property type="molecule type" value="Genomic_DNA"/>
</dbReference>
<dbReference type="EMBL" id="AOHU01000092">
    <property type="protein sequence ID" value="ELY27597.1"/>
    <property type="molecule type" value="Genomic_DNA"/>
</dbReference>
<dbReference type="RefSeq" id="WP_004043926.1">
    <property type="nucleotide sequence ID" value="NC_013967.1"/>
</dbReference>
<dbReference type="SMR" id="D4GVJ3"/>
<dbReference type="STRING" id="309800.HVO_1016"/>
<dbReference type="PaxDb" id="309800-C498_13679"/>
<dbReference type="EnsemblBacteria" id="ADE03305">
    <property type="protein sequence ID" value="ADE03305"/>
    <property type="gene ID" value="HVO_1016"/>
</dbReference>
<dbReference type="GeneID" id="8926558"/>
<dbReference type="KEGG" id="hvo:HVO_1016"/>
<dbReference type="PATRIC" id="fig|309800.29.peg.2628"/>
<dbReference type="eggNOG" id="arCOG01139">
    <property type="taxonomic scope" value="Archaea"/>
</dbReference>
<dbReference type="HOGENOM" id="CLU_116578_0_0_2"/>
<dbReference type="OrthoDB" id="4612at2157"/>
<dbReference type="Proteomes" id="UP000008243">
    <property type="component" value="Chromosome"/>
</dbReference>
<dbReference type="Proteomes" id="UP000011532">
    <property type="component" value="Unassembled WGS sequence"/>
</dbReference>
<dbReference type="GO" id="GO:0046872">
    <property type="term" value="F:metal ion binding"/>
    <property type="evidence" value="ECO:0007669"/>
    <property type="project" value="UniProtKB-KW"/>
</dbReference>
<dbReference type="GO" id="GO:0008237">
    <property type="term" value="F:metallopeptidase activity"/>
    <property type="evidence" value="ECO:0007669"/>
    <property type="project" value="UniProtKB-KW"/>
</dbReference>
<dbReference type="GO" id="GO:0006508">
    <property type="term" value="P:proteolysis"/>
    <property type="evidence" value="ECO:0007669"/>
    <property type="project" value="UniProtKB-KW"/>
</dbReference>
<dbReference type="CDD" id="cd08072">
    <property type="entry name" value="MPN_archaeal"/>
    <property type="match status" value="1"/>
</dbReference>
<dbReference type="Gene3D" id="3.40.140.10">
    <property type="entry name" value="Cytidine Deaminase, domain 2"/>
    <property type="match status" value="1"/>
</dbReference>
<dbReference type="InterPro" id="IPR028090">
    <property type="entry name" value="JAB_dom_prok"/>
</dbReference>
<dbReference type="InterPro" id="IPR037518">
    <property type="entry name" value="MPN"/>
</dbReference>
<dbReference type="Pfam" id="PF14464">
    <property type="entry name" value="Prok-JAB"/>
    <property type="match status" value="1"/>
</dbReference>
<dbReference type="SUPFAM" id="SSF102712">
    <property type="entry name" value="JAB1/MPN domain"/>
    <property type="match status" value="1"/>
</dbReference>
<dbReference type="PROSITE" id="PS50249">
    <property type="entry name" value="MPN"/>
    <property type="match status" value="1"/>
</dbReference>
<protein>
    <recommendedName>
        <fullName>Probable metalloprotease HVO_1016</fullName>
    </recommendedName>
    <alternativeName>
        <fullName>HvJAMM2</fullName>
    </alternativeName>
</protein>
<evidence type="ECO:0000250" key="1"/>
<evidence type="ECO:0000255" key="2">
    <source>
        <dbReference type="PROSITE-ProRule" id="PRU01182"/>
    </source>
</evidence>
<evidence type="ECO:0000269" key="3">
    <source>
    </source>
</evidence>
<evidence type="ECO:0000305" key="4"/>